<keyword id="KW-0030">Aminoacyl-tRNA synthetase</keyword>
<keyword id="KW-0067">ATP-binding</keyword>
<keyword id="KW-0963">Cytoplasm</keyword>
<keyword id="KW-0436">Ligase</keyword>
<keyword id="KW-0479">Metal-binding</keyword>
<keyword id="KW-0547">Nucleotide-binding</keyword>
<keyword id="KW-0648">Protein biosynthesis</keyword>
<keyword id="KW-1185">Reference proteome</keyword>
<keyword id="KW-0694">RNA-binding</keyword>
<keyword id="KW-0820">tRNA-binding</keyword>
<keyword id="KW-0862">Zinc</keyword>
<protein>
    <recommendedName>
        <fullName evidence="1">Threonine--tRNA ligase</fullName>
        <ecNumber evidence="1">6.1.1.3</ecNumber>
    </recommendedName>
    <alternativeName>
        <fullName evidence="1">Threonyl-tRNA synthetase</fullName>
        <shortName evidence="1">ThrRS</shortName>
    </alternativeName>
</protein>
<proteinExistence type="inferred from homology"/>
<sequence>MPVITLPDGSQRSFDHAVSVMDIAMDIGPGLAKACIAGRVNGELVDAVDPIVDDASVAIITAKDEAGLEIIRHSCAHLLGHAIKQLWPDTKMAIGPVIDNGFYYDVDLDRTLTQEDIELLEKRMHQLAETNYDVIKKKVSWQEARDAFAARGENYKTTILDENISHDDRPGLYHHQEYVDMCRGPHVPNMRFCHHFKLQKISGAYWRGDSNNKMLQRIYGTAWADKKQLAAYLLRLEEAAKRDHRKIGKQLDLYHMQEEAPGMVFWHNDGWTIFRELEVFVRTKLKEYEYQEVKGPFMMDRVLWEKTGHWENYKEAMFTTSSENREYCIKPMNCPGHVQIFNQGLKSYRDLPLRMAEFGSCHRNEPSGALHGLMRVRGFTQDDAHIFCTEEQVRDEVNSCIKMVYDMYSTFGFEKIVVKLSTRPEKRIGSDDLWDRSEADLAAALKENGIPFEYQPGEGAFYGPKIEFTLHDCLDRAWQCGTVQLDFSLPGRLSASYVGESNERQVPVMIHRAILGSMERFIGILTEEYAGFFPTWLAPVQVVVMNITDGQSEYVAELTRKLQNAGIRAKADLRNEKIGFKIREHTLRRVPYMLVCGDKEVEAGKVAVRTRRGKDLGSIDVNEVIAKLQDEIRSRNLHQLEE</sequence>
<name>SYT_ERWT9</name>
<dbReference type="EC" id="6.1.1.3" evidence="1"/>
<dbReference type="EMBL" id="CU468135">
    <property type="protein sequence ID" value="CAO96887.1"/>
    <property type="molecule type" value="Genomic_DNA"/>
</dbReference>
<dbReference type="RefSeq" id="WP_012441571.1">
    <property type="nucleotide sequence ID" value="NC_010694.1"/>
</dbReference>
<dbReference type="SMR" id="B2VEM1"/>
<dbReference type="STRING" id="465817.ETA_18410"/>
<dbReference type="KEGG" id="eta:ETA_18410"/>
<dbReference type="eggNOG" id="COG0441">
    <property type="taxonomic scope" value="Bacteria"/>
</dbReference>
<dbReference type="HOGENOM" id="CLU_008554_0_1_6"/>
<dbReference type="OrthoDB" id="9802304at2"/>
<dbReference type="Proteomes" id="UP000001726">
    <property type="component" value="Chromosome"/>
</dbReference>
<dbReference type="GO" id="GO:0005829">
    <property type="term" value="C:cytosol"/>
    <property type="evidence" value="ECO:0007669"/>
    <property type="project" value="TreeGrafter"/>
</dbReference>
<dbReference type="GO" id="GO:0005524">
    <property type="term" value="F:ATP binding"/>
    <property type="evidence" value="ECO:0007669"/>
    <property type="project" value="UniProtKB-UniRule"/>
</dbReference>
<dbReference type="GO" id="GO:0046872">
    <property type="term" value="F:metal ion binding"/>
    <property type="evidence" value="ECO:0007669"/>
    <property type="project" value="UniProtKB-KW"/>
</dbReference>
<dbReference type="GO" id="GO:0004829">
    <property type="term" value="F:threonine-tRNA ligase activity"/>
    <property type="evidence" value="ECO:0007669"/>
    <property type="project" value="UniProtKB-UniRule"/>
</dbReference>
<dbReference type="GO" id="GO:0000049">
    <property type="term" value="F:tRNA binding"/>
    <property type="evidence" value="ECO:0007669"/>
    <property type="project" value="UniProtKB-KW"/>
</dbReference>
<dbReference type="GO" id="GO:0006435">
    <property type="term" value="P:threonyl-tRNA aminoacylation"/>
    <property type="evidence" value="ECO:0007669"/>
    <property type="project" value="UniProtKB-UniRule"/>
</dbReference>
<dbReference type="CDD" id="cd01667">
    <property type="entry name" value="TGS_ThrRS"/>
    <property type="match status" value="1"/>
</dbReference>
<dbReference type="CDD" id="cd00860">
    <property type="entry name" value="ThrRS_anticodon"/>
    <property type="match status" value="1"/>
</dbReference>
<dbReference type="CDD" id="cd00771">
    <property type="entry name" value="ThrRS_core"/>
    <property type="match status" value="1"/>
</dbReference>
<dbReference type="FunFam" id="3.10.20.30:FF:000005">
    <property type="entry name" value="Threonine--tRNA ligase"/>
    <property type="match status" value="1"/>
</dbReference>
<dbReference type="FunFam" id="3.30.54.20:FF:000002">
    <property type="entry name" value="Threonine--tRNA ligase"/>
    <property type="match status" value="1"/>
</dbReference>
<dbReference type="FunFam" id="3.30.930.10:FF:000002">
    <property type="entry name" value="Threonine--tRNA ligase"/>
    <property type="match status" value="1"/>
</dbReference>
<dbReference type="FunFam" id="3.40.50.800:FF:000001">
    <property type="entry name" value="Threonine--tRNA ligase"/>
    <property type="match status" value="1"/>
</dbReference>
<dbReference type="FunFam" id="3.30.980.10:FF:000005">
    <property type="entry name" value="Threonyl-tRNA synthetase, mitochondrial"/>
    <property type="match status" value="1"/>
</dbReference>
<dbReference type="Gene3D" id="3.10.20.30">
    <property type="match status" value="1"/>
</dbReference>
<dbReference type="Gene3D" id="3.30.54.20">
    <property type="match status" value="1"/>
</dbReference>
<dbReference type="Gene3D" id="3.40.50.800">
    <property type="entry name" value="Anticodon-binding domain"/>
    <property type="match status" value="1"/>
</dbReference>
<dbReference type="Gene3D" id="3.30.930.10">
    <property type="entry name" value="Bira Bifunctional Protein, Domain 2"/>
    <property type="match status" value="1"/>
</dbReference>
<dbReference type="Gene3D" id="3.30.980.10">
    <property type="entry name" value="Threonyl-trna Synthetase, Chain A, domain 2"/>
    <property type="match status" value="1"/>
</dbReference>
<dbReference type="HAMAP" id="MF_00184">
    <property type="entry name" value="Thr_tRNA_synth"/>
    <property type="match status" value="1"/>
</dbReference>
<dbReference type="InterPro" id="IPR002314">
    <property type="entry name" value="aa-tRNA-synt_IIb"/>
</dbReference>
<dbReference type="InterPro" id="IPR006195">
    <property type="entry name" value="aa-tRNA-synth_II"/>
</dbReference>
<dbReference type="InterPro" id="IPR045864">
    <property type="entry name" value="aa-tRNA-synth_II/BPL/LPL"/>
</dbReference>
<dbReference type="InterPro" id="IPR004154">
    <property type="entry name" value="Anticodon-bd"/>
</dbReference>
<dbReference type="InterPro" id="IPR036621">
    <property type="entry name" value="Anticodon-bd_dom_sf"/>
</dbReference>
<dbReference type="InterPro" id="IPR012675">
    <property type="entry name" value="Beta-grasp_dom_sf"/>
</dbReference>
<dbReference type="InterPro" id="IPR004095">
    <property type="entry name" value="TGS"/>
</dbReference>
<dbReference type="InterPro" id="IPR012676">
    <property type="entry name" value="TGS-like"/>
</dbReference>
<dbReference type="InterPro" id="IPR002320">
    <property type="entry name" value="Thr-tRNA-ligase_IIa"/>
</dbReference>
<dbReference type="InterPro" id="IPR018163">
    <property type="entry name" value="Thr/Ala-tRNA-synth_IIc_edit"/>
</dbReference>
<dbReference type="InterPro" id="IPR047246">
    <property type="entry name" value="ThrRS_anticodon"/>
</dbReference>
<dbReference type="InterPro" id="IPR033728">
    <property type="entry name" value="ThrRS_core"/>
</dbReference>
<dbReference type="InterPro" id="IPR012947">
    <property type="entry name" value="tRNA_SAD"/>
</dbReference>
<dbReference type="NCBIfam" id="TIGR00418">
    <property type="entry name" value="thrS"/>
    <property type="match status" value="1"/>
</dbReference>
<dbReference type="PANTHER" id="PTHR11451:SF44">
    <property type="entry name" value="THREONINE--TRNA LIGASE, CHLOROPLASTIC_MITOCHONDRIAL 2"/>
    <property type="match status" value="1"/>
</dbReference>
<dbReference type="PANTHER" id="PTHR11451">
    <property type="entry name" value="THREONINE-TRNA LIGASE"/>
    <property type="match status" value="1"/>
</dbReference>
<dbReference type="Pfam" id="PF03129">
    <property type="entry name" value="HGTP_anticodon"/>
    <property type="match status" value="1"/>
</dbReference>
<dbReference type="Pfam" id="PF02824">
    <property type="entry name" value="TGS"/>
    <property type="match status" value="1"/>
</dbReference>
<dbReference type="Pfam" id="PF00587">
    <property type="entry name" value="tRNA-synt_2b"/>
    <property type="match status" value="1"/>
</dbReference>
<dbReference type="Pfam" id="PF07973">
    <property type="entry name" value="tRNA_SAD"/>
    <property type="match status" value="1"/>
</dbReference>
<dbReference type="PRINTS" id="PR01047">
    <property type="entry name" value="TRNASYNTHTHR"/>
</dbReference>
<dbReference type="SMART" id="SM00863">
    <property type="entry name" value="tRNA_SAD"/>
    <property type="match status" value="1"/>
</dbReference>
<dbReference type="SUPFAM" id="SSF52954">
    <property type="entry name" value="Class II aaRS ABD-related"/>
    <property type="match status" value="1"/>
</dbReference>
<dbReference type="SUPFAM" id="SSF55681">
    <property type="entry name" value="Class II aaRS and biotin synthetases"/>
    <property type="match status" value="1"/>
</dbReference>
<dbReference type="SUPFAM" id="SSF81271">
    <property type="entry name" value="TGS-like"/>
    <property type="match status" value="1"/>
</dbReference>
<dbReference type="SUPFAM" id="SSF55186">
    <property type="entry name" value="ThrRS/AlaRS common domain"/>
    <property type="match status" value="1"/>
</dbReference>
<dbReference type="PROSITE" id="PS50862">
    <property type="entry name" value="AA_TRNA_LIGASE_II"/>
    <property type="match status" value="1"/>
</dbReference>
<dbReference type="PROSITE" id="PS51880">
    <property type="entry name" value="TGS"/>
    <property type="match status" value="1"/>
</dbReference>
<organism>
    <name type="scientific">Erwinia tasmaniensis (strain DSM 17950 / CFBP 7177 / CIP 109463 / NCPPB 4357 / Et1/99)</name>
    <dbReference type="NCBI Taxonomy" id="465817"/>
    <lineage>
        <taxon>Bacteria</taxon>
        <taxon>Pseudomonadati</taxon>
        <taxon>Pseudomonadota</taxon>
        <taxon>Gammaproteobacteria</taxon>
        <taxon>Enterobacterales</taxon>
        <taxon>Erwiniaceae</taxon>
        <taxon>Erwinia</taxon>
    </lineage>
</organism>
<evidence type="ECO:0000255" key="1">
    <source>
        <dbReference type="HAMAP-Rule" id="MF_00184"/>
    </source>
</evidence>
<evidence type="ECO:0000255" key="2">
    <source>
        <dbReference type="PROSITE-ProRule" id="PRU01228"/>
    </source>
</evidence>
<accession>B2VEM1</accession>
<comment type="function">
    <text evidence="1">Catalyzes the attachment of threonine to tRNA(Thr) in a two-step reaction: L-threonine is first activated by ATP to form Thr-AMP and then transferred to the acceptor end of tRNA(Thr). Also edits incorrectly charged L-seryl-tRNA(Thr).</text>
</comment>
<comment type="catalytic activity">
    <reaction evidence="1">
        <text>tRNA(Thr) + L-threonine + ATP = L-threonyl-tRNA(Thr) + AMP + diphosphate + H(+)</text>
        <dbReference type="Rhea" id="RHEA:24624"/>
        <dbReference type="Rhea" id="RHEA-COMP:9670"/>
        <dbReference type="Rhea" id="RHEA-COMP:9704"/>
        <dbReference type="ChEBI" id="CHEBI:15378"/>
        <dbReference type="ChEBI" id="CHEBI:30616"/>
        <dbReference type="ChEBI" id="CHEBI:33019"/>
        <dbReference type="ChEBI" id="CHEBI:57926"/>
        <dbReference type="ChEBI" id="CHEBI:78442"/>
        <dbReference type="ChEBI" id="CHEBI:78534"/>
        <dbReference type="ChEBI" id="CHEBI:456215"/>
        <dbReference type="EC" id="6.1.1.3"/>
    </reaction>
</comment>
<comment type="cofactor">
    <cofactor evidence="1">
        <name>Zn(2+)</name>
        <dbReference type="ChEBI" id="CHEBI:29105"/>
    </cofactor>
    <text evidence="1">Binds 1 zinc ion per subunit.</text>
</comment>
<comment type="subunit">
    <text evidence="1">Homodimer.</text>
</comment>
<comment type="subcellular location">
    <subcellularLocation>
        <location evidence="1">Cytoplasm</location>
    </subcellularLocation>
</comment>
<comment type="similarity">
    <text evidence="1">Belongs to the class-II aminoacyl-tRNA synthetase family.</text>
</comment>
<feature type="chain" id="PRO_1000098571" description="Threonine--tRNA ligase">
    <location>
        <begin position="1"/>
        <end position="642"/>
    </location>
</feature>
<feature type="domain" description="TGS" evidence="2">
    <location>
        <begin position="1"/>
        <end position="61"/>
    </location>
</feature>
<feature type="region of interest" description="Catalytic" evidence="1">
    <location>
        <begin position="243"/>
        <end position="534"/>
    </location>
</feature>
<feature type="binding site" evidence="1">
    <location>
        <position position="334"/>
    </location>
    <ligand>
        <name>Zn(2+)</name>
        <dbReference type="ChEBI" id="CHEBI:29105"/>
    </ligand>
</feature>
<feature type="binding site" evidence="1">
    <location>
        <position position="385"/>
    </location>
    <ligand>
        <name>Zn(2+)</name>
        <dbReference type="ChEBI" id="CHEBI:29105"/>
    </ligand>
</feature>
<feature type="binding site" evidence="1">
    <location>
        <position position="511"/>
    </location>
    <ligand>
        <name>Zn(2+)</name>
        <dbReference type="ChEBI" id="CHEBI:29105"/>
    </ligand>
</feature>
<reference key="1">
    <citation type="journal article" date="2008" name="Environ. Microbiol.">
        <title>The genome of Erwinia tasmaniensis strain Et1/99, a non-pathogenic bacterium in the genus Erwinia.</title>
        <authorList>
            <person name="Kube M."/>
            <person name="Migdoll A.M."/>
            <person name="Mueller I."/>
            <person name="Kuhl H."/>
            <person name="Beck A."/>
            <person name="Reinhardt R."/>
            <person name="Geider K."/>
        </authorList>
    </citation>
    <scope>NUCLEOTIDE SEQUENCE [LARGE SCALE GENOMIC DNA]</scope>
    <source>
        <strain>DSM 17950 / CFBP 7177 / CIP 109463 / NCPPB 4357 / Et1/99</strain>
    </source>
</reference>
<gene>
    <name evidence="1" type="primary">thrS</name>
    <name type="ordered locus">ETA_18410</name>
</gene>